<keyword id="KW-0028">Amino-acid biosynthesis</keyword>
<keyword id="KW-0067">ATP-binding</keyword>
<keyword id="KW-0418">Kinase</keyword>
<keyword id="KW-0547">Nucleotide-binding</keyword>
<keyword id="KW-0791">Threonine biosynthesis</keyword>
<keyword id="KW-0808">Transferase</keyword>
<sequence length="326" mass="36645">MAVYTDINEIELGAFLRHYDIGTLTSYKGIAEGVENSNYLLHTSSGSFILTLYEKRTNREDLPFFLGLMQHLAKRGLECPQPVVRNDGAMIGQLAGRPAAIVTFLEGMWMRRPTVAHCEAVGEGLAHMHLAGADFPMRRRNGLTLPDWRPLWNLSRKCADTVERGLVAETEADLDFLEKNWPADLPQGVIHADLFPDNAFFLGDRLSGFIDFYFACTDILAYDVAVCLNAWCFEKDFSYNRTKGAALLRGYTSVRPLSEAEADALLVLARGAAVRFMLTRLYDWLTVPAGSFVVKKDPMEYVRRMRFHRQIESAAEYGLEMQGVAA</sequence>
<organism>
    <name type="scientific">Brucella abortus (strain S19)</name>
    <dbReference type="NCBI Taxonomy" id="430066"/>
    <lineage>
        <taxon>Bacteria</taxon>
        <taxon>Pseudomonadati</taxon>
        <taxon>Pseudomonadota</taxon>
        <taxon>Alphaproteobacteria</taxon>
        <taxon>Hyphomicrobiales</taxon>
        <taxon>Brucellaceae</taxon>
        <taxon>Brucella/Ochrobactrum group</taxon>
        <taxon>Brucella</taxon>
    </lineage>
</organism>
<dbReference type="EC" id="2.7.1.39" evidence="1"/>
<dbReference type="EMBL" id="CP000887">
    <property type="protein sequence ID" value="ACD72000.1"/>
    <property type="molecule type" value="Genomic_DNA"/>
</dbReference>
<dbReference type="RefSeq" id="WP_002963634.1">
    <property type="nucleotide sequence ID" value="NC_010742.1"/>
</dbReference>
<dbReference type="SMR" id="B2S9X0"/>
<dbReference type="KEGG" id="bmc:BAbS19_I04650"/>
<dbReference type="HOGENOM" id="CLU_053300_1_0_5"/>
<dbReference type="UniPathway" id="UPA00050">
    <property type="reaction ID" value="UER00064"/>
</dbReference>
<dbReference type="Proteomes" id="UP000002565">
    <property type="component" value="Chromosome 1"/>
</dbReference>
<dbReference type="GO" id="GO:0005524">
    <property type="term" value="F:ATP binding"/>
    <property type="evidence" value="ECO:0007669"/>
    <property type="project" value="UniProtKB-KW"/>
</dbReference>
<dbReference type="GO" id="GO:0004413">
    <property type="term" value="F:homoserine kinase activity"/>
    <property type="evidence" value="ECO:0007669"/>
    <property type="project" value="UniProtKB-UniRule"/>
</dbReference>
<dbReference type="GO" id="GO:0009088">
    <property type="term" value="P:threonine biosynthetic process"/>
    <property type="evidence" value="ECO:0007669"/>
    <property type="project" value="UniProtKB-UniRule"/>
</dbReference>
<dbReference type="CDD" id="cd05153">
    <property type="entry name" value="HomoserineK_II"/>
    <property type="match status" value="1"/>
</dbReference>
<dbReference type="Gene3D" id="3.90.1200.10">
    <property type="match status" value="1"/>
</dbReference>
<dbReference type="Gene3D" id="3.30.200.20">
    <property type="entry name" value="Phosphorylase Kinase, domain 1"/>
    <property type="match status" value="1"/>
</dbReference>
<dbReference type="HAMAP" id="MF_00301">
    <property type="entry name" value="Homoser_kinase_2"/>
    <property type="match status" value="1"/>
</dbReference>
<dbReference type="InterPro" id="IPR002575">
    <property type="entry name" value="Aminoglycoside_PTrfase"/>
</dbReference>
<dbReference type="InterPro" id="IPR005280">
    <property type="entry name" value="Homoserine_kinase_II"/>
</dbReference>
<dbReference type="InterPro" id="IPR011009">
    <property type="entry name" value="Kinase-like_dom_sf"/>
</dbReference>
<dbReference type="InterPro" id="IPR050249">
    <property type="entry name" value="Pseudomonas-type_ThrB"/>
</dbReference>
<dbReference type="NCBIfam" id="NF003558">
    <property type="entry name" value="PRK05231.1"/>
    <property type="match status" value="1"/>
</dbReference>
<dbReference type="NCBIfam" id="TIGR00938">
    <property type="entry name" value="thrB_alt"/>
    <property type="match status" value="1"/>
</dbReference>
<dbReference type="PANTHER" id="PTHR21064:SF6">
    <property type="entry name" value="AMINOGLYCOSIDE PHOSPHOTRANSFERASE DOMAIN-CONTAINING PROTEIN"/>
    <property type="match status" value="1"/>
</dbReference>
<dbReference type="PANTHER" id="PTHR21064">
    <property type="entry name" value="AMINOGLYCOSIDE PHOSPHOTRANSFERASE DOMAIN-CONTAINING PROTEIN-RELATED"/>
    <property type="match status" value="1"/>
</dbReference>
<dbReference type="Pfam" id="PF01636">
    <property type="entry name" value="APH"/>
    <property type="match status" value="1"/>
</dbReference>
<dbReference type="SUPFAM" id="SSF56112">
    <property type="entry name" value="Protein kinase-like (PK-like)"/>
    <property type="match status" value="1"/>
</dbReference>
<reference key="1">
    <citation type="journal article" date="2008" name="PLoS ONE">
        <title>Genome sequence of Brucella abortus vaccine strain S19 compared to virulent strains yields candidate virulence genes.</title>
        <authorList>
            <person name="Crasta O.R."/>
            <person name="Folkerts O."/>
            <person name="Fei Z."/>
            <person name="Mane S.P."/>
            <person name="Evans C."/>
            <person name="Martino-Catt S."/>
            <person name="Bricker B."/>
            <person name="Yu G."/>
            <person name="Du L."/>
            <person name="Sobral B.W."/>
        </authorList>
    </citation>
    <scope>NUCLEOTIDE SEQUENCE [LARGE SCALE GENOMIC DNA]</scope>
    <source>
        <strain>S19</strain>
    </source>
</reference>
<proteinExistence type="inferred from homology"/>
<comment type="catalytic activity">
    <reaction evidence="1">
        <text>L-homoserine + ATP = O-phospho-L-homoserine + ADP + H(+)</text>
        <dbReference type="Rhea" id="RHEA:13985"/>
        <dbReference type="ChEBI" id="CHEBI:15378"/>
        <dbReference type="ChEBI" id="CHEBI:30616"/>
        <dbReference type="ChEBI" id="CHEBI:57476"/>
        <dbReference type="ChEBI" id="CHEBI:57590"/>
        <dbReference type="ChEBI" id="CHEBI:456216"/>
        <dbReference type="EC" id="2.7.1.39"/>
    </reaction>
</comment>
<comment type="pathway">
    <text evidence="1">Amino-acid biosynthesis; L-threonine biosynthesis; L-threonine from L-aspartate: step 4/5.</text>
</comment>
<comment type="similarity">
    <text evidence="1">Belongs to the pseudomonas-type ThrB family.</text>
</comment>
<protein>
    <recommendedName>
        <fullName evidence="1">Homoserine kinase</fullName>
        <shortName evidence="1">HK</shortName>
        <shortName evidence="1">HSK</shortName>
        <ecNumber evidence="1">2.7.1.39</ecNumber>
    </recommendedName>
</protein>
<evidence type="ECO:0000255" key="1">
    <source>
        <dbReference type="HAMAP-Rule" id="MF_00301"/>
    </source>
</evidence>
<accession>B2S9X0</accession>
<feature type="chain" id="PRO_1000115424" description="Homoserine kinase">
    <location>
        <begin position="1"/>
        <end position="326"/>
    </location>
</feature>
<name>KHSE_BRUA1</name>
<gene>
    <name evidence="1" type="primary">thrB</name>
    <name type="ordered locus">BAbS19_I04650</name>
</gene>